<accession>B7J1T9</accession>
<accession>Q45055</accession>
<feature type="chain" id="PRO_1000125489" description="Probable M18 family aminopeptidase 1">
    <location>
        <begin position="1"/>
        <end position="458"/>
    </location>
</feature>
<feature type="binding site" evidence="1">
    <location>
        <position position="95"/>
    </location>
    <ligand>
        <name>Zn(2+)</name>
        <dbReference type="ChEBI" id="CHEBI:29105"/>
    </ligand>
</feature>
<feature type="binding site" evidence="1">
    <location>
        <position position="170"/>
    </location>
    <ligand>
        <name>Zn(2+)</name>
        <dbReference type="ChEBI" id="CHEBI:29105"/>
    </ligand>
</feature>
<feature type="binding site" evidence="1">
    <location>
        <position position="434"/>
    </location>
    <ligand>
        <name>Zn(2+)</name>
        <dbReference type="ChEBI" id="CHEBI:29105"/>
    </ligand>
</feature>
<evidence type="ECO:0000255" key="1">
    <source>
        <dbReference type="HAMAP-Rule" id="MF_00466"/>
    </source>
</evidence>
<keyword id="KW-0031">Aminopeptidase</keyword>
<keyword id="KW-0378">Hydrolase</keyword>
<keyword id="KW-0479">Metal-binding</keyword>
<keyword id="KW-0482">Metalloprotease</keyword>
<keyword id="KW-0645">Protease</keyword>
<keyword id="KW-0862">Zinc</keyword>
<name>APEA_BORBZ</name>
<protein>
    <recommendedName>
        <fullName evidence="1">Probable M18 family aminopeptidase 1</fullName>
        <ecNumber evidence="1">3.4.11.-</ecNumber>
    </recommendedName>
</protein>
<comment type="cofactor">
    <cofactor evidence="1">
        <name>Zn(2+)</name>
        <dbReference type="ChEBI" id="CHEBI:29105"/>
    </cofactor>
</comment>
<comment type="similarity">
    <text evidence="1">Belongs to the peptidase M18 family.</text>
</comment>
<dbReference type="EC" id="3.4.11.-" evidence="1"/>
<dbReference type="EMBL" id="X78708">
    <property type="protein sequence ID" value="CAA55361.1"/>
    <property type="molecule type" value="Genomic_DNA"/>
</dbReference>
<dbReference type="EMBL" id="CP001205">
    <property type="protein sequence ID" value="ACK74892.1"/>
    <property type="molecule type" value="Genomic_DNA"/>
</dbReference>
<dbReference type="PIR" id="E70145">
    <property type="entry name" value="E70145"/>
</dbReference>
<dbReference type="RefSeq" id="WP_002657823.1">
    <property type="nucleotide sequence ID" value="NC_011728.1"/>
</dbReference>
<dbReference type="SMR" id="B7J1T9"/>
<dbReference type="GeneID" id="56567794"/>
<dbReference type="KEGG" id="bbz:BbuZS7_0368"/>
<dbReference type="HOGENOM" id="CLU_590123_0_0_12"/>
<dbReference type="Proteomes" id="UP000006901">
    <property type="component" value="Chromosome"/>
</dbReference>
<dbReference type="GO" id="GO:0005737">
    <property type="term" value="C:cytoplasm"/>
    <property type="evidence" value="ECO:0007669"/>
    <property type="project" value="UniProtKB-ARBA"/>
</dbReference>
<dbReference type="GO" id="GO:0004177">
    <property type="term" value="F:aminopeptidase activity"/>
    <property type="evidence" value="ECO:0007669"/>
    <property type="project" value="UniProtKB-UniRule"/>
</dbReference>
<dbReference type="GO" id="GO:0008237">
    <property type="term" value="F:metallopeptidase activity"/>
    <property type="evidence" value="ECO:0007669"/>
    <property type="project" value="UniProtKB-UniRule"/>
</dbReference>
<dbReference type="GO" id="GO:0008270">
    <property type="term" value="F:zinc ion binding"/>
    <property type="evidence" value="ECO:0007669"/>
    <property type="project" value="UniProtKB-UniRule"/>
</dbReference>
<dbReference type="GO" id="GO:0006508">
    <property type="term" value="P:proteolysis"/>
    <property type="evidence" value="ECO:0007669"/>
    <property type="project" value="UniProtKB-UniRule"/>
</dbReference>
<dbReference type="CDD" id="cd05659">
    <property type="entry name" value="M18_API"/>
    <property type="match status" value="1"/>
</dbReference>
<dbReference type="FunFam" id="2.30.250.10:FF:000006">
    <property type="entry name" value="Probable M18 family aminopeptidase 1"/>
    <property type="match status" value="1"/>
</dbReference>
<dbReference type="Gene3D" id="2.30.250.10">
    <property type="entry name" value="Aminopeptidase i, Domain 2"/>
    <property type="match status" value="1"/>
</dbReference>
<dbReference type="Gene3D" id="3.40.630.10">
    <property type="entry name" value="Zn peptidases"/>
    <property type="match status" value="1"/>
</dbReference>
<dbReference type="HAMAP" id="MF_00466">
    <property type="entry name" value="Aminopeptidase_M18_1"/>
    <property type="match status" value="1"/>
</dbReference>
<dbReference type="InterPro" id="IPR022983">
    <property type="entry name" value="M18_aminopeptidase_1"/>
</dbReference>
<dbReference type="InterPro" id="IPR001948">
    <property type="entry name" value="Peptidase_M18"/>
</dbReference>
<dbReference type="InterPro" id="IPR023358">
    <property type="entry name" value="Peptidase_M18_dom2"/>
</dbReference>
<dbReference type="NCBIfam" id="NF002600">
    <property type="entry name" value="PRK02256.1"/>
    <property type="match status" value="1"/>
</dbReference>
<dbReference type="PANTHER" id="PTHR28570">
    <property type="entry name" value="ASPARTYL AMINOPEPTIDASE"/>
    <property type="match status" value="1"/>
</dbReference>
<dbReference type="PANTHER" id="PTHR28570:SF2">
    <property type="entry name" value="M18 FAMILY AMINOPEPTIDASE 1-RELATED"/>
    <property type="match status" value="1"/>
</dbReference>
<dbReference type="Pfam" id="PF02127">
    <property type="entry name" value="Peptidase_M18"/>
    <property type="match status" value="1"/>
</dbReference>
<dbReference type="PRINTS" id="PR00932">
    <property type="entry name" value="AMINO1PTASE"/>
</dbReference>
<dbReference type="SUPFAM" id="SSF101821">
    <property type="entry name" value="Aminopeptidase/glucanase lid domain"/>
    <property type="match status" value="1"/>
</dbReference>
<dbReference type="SUPFAM" id="SSF53187">
    <property type="entry name" value="Zn-dependent exopeptidases"/>
    <property type="match status" value="1"/>
</dbReference>
<proteinExistence type="inferred from homology"/>
<reference key="1">
    <citation type="submission" date="1994-04" db="EMBL/GenBank/DDBJ databases">
        <title>A Borrelia burgdorferi homolog to the Saccharomyces cerevisiae aminopeptidase I (APE1).</title>
        <authorList>
            <person name="Wallich R."/>
            <person name="Kramer M.D."/>
            <person name="Simon M.M."/>
        </authorList>
    </citation>
    <scope>NUCLEOTIDE SEQUENCE [GENOMIC DNA]</scope>
</reference>
<reference key="2">
    <citation type="journal article" date="2011" name="J. Bacteriol.">
        <title>Whole-genome sequences of thirteen isolates of Borrelia burgdorferi.</title>
        <authorList>
            <person name="Schutzer S.E."/>
            <person name="Fraser-Liggett C.M."/>
            <person name="Casjens S.R."/>
            <person name="Qiu W.G."/>
            <person name="Dunn J.J."/>
            <person name="Mongodin E.F."/>
            <person name="Luft B.J."/>
        </authorList>
    </citation>
    <scope>NUCLEOTIDE SEQUENCE [LARGE SCALE GENOMIC DNA]</scope>
    <source>
        <strain>ZS7</strain>
    </source>
</reference>
<gene>
    <name evidence="1" type="primary">apeA</name>
    <name type="ordered locus">BbuZS7_0368</name>
</gene>
<sequence>MKKQNPWIYLNEEEKNQILNFSESYKKFISKFKTEREVTAYALDKAKKLGFINAEEKKNLMPGDKIFYTCREKSVAFAIIGKNPIEDGMNFIVSHTDSPRLDAKPSPISEENELTFIKTNYYGGIKKYQWLSTPLSIRGVVFLKNGEKVEINIGDNENDPVFVIPDILPHLDRKIQRNKKSDEIVEGENLKILIGSLPIETKEKNKVKLATLQLIKEKYKIEEEDFVSSEIEIVPAGTAKDVGFDKALIGAYGQDDKICVFTSLESIFDLEETPNKTAICFLVDKEEIGSTGSTGLDSRYLEYFVSDMIFKIKKSEYNNLHVQKALWNSKSISADVCAAINPLFSSVHDEQNAPQLGYGIPIMKYTGHGGKSMASDADAELVSYIRQLLNKNNIAWQVATLGKVEEGGGGTVAKFLAGYGIRTIDMGPAVISMHSPMEITSKFDLYNAYLAYKAFYRE</sequence>
<organism>
    <name type="scientific">Borreliella burgdorferi (strain ZS7)</name>
    <name type="common">Borrelia burgdorferi</name>
    <dbReference type="NCBI Taxonomy" id="445985"/>
    <lineage>
        <taxon>Bacteria</taxon>
        <taxon>Pseudomonadati</taxon>
        <taxon>Spirochaetota</taxon>
        <taxon>Spirochaetia</taxon>
        <taxon>Spirochaetales</taxon>
        <taxon>Borreliaceae</taxon>
        <taxon>Borreliella</taxon>
    </lineage>
</organism>